<name>THIG_BART1</name>
<protein>
    <recommendedName>
        <fullName evidence="1">Thiazole synthase</fullName>
        <ecNumber evidence="1">2.8.1.10</ecNumber>
    </recommendedName>
</protein>
<accession>A9IRH0</accession>
<feature type="chain" id="PRO_1000196839" description="Thiazole synthase">
    <location>
        <begin position="1"/>
        <end position="256"/>
    </location>
</feature>
<feature type="active site" description="Schiff-base intermediate with DXP" evidence="1">
    <location>
        <position position="96"/>
    </location>
</feature>
<feature type="binding site" evidence="1">
    <location>
        <position position="157"/>
    </location>
    <ligand>
        <name>1-deoxy-D-xylulose 5-phosphate</name>
        <dbReference type="ChEBI" id="CHEBI:57792"/>
    </ligand>
</feature>
<feature type="binding site" evidence="1">
    <location>
        <begin position="184"/>
        <end position="185"/>
    </location>
    <ligand>
        <name>1-deoxy-D-xylulose 5-phosphate</name>
        <dbReference type="ChEBI" id="CHEBI:57792"/>
    </ligand>
</feature>
<feature type="binding site" evidence="1">
    <location>
        <begin position="206"/>
        <end position="207"/>
    </location>
    <ligand>
        <name>1-deoxy-D-xylulose 5-phosphate</name>
        <dbReference type="ChEBI" id="CHEBI:57792"/>
    </ligand>
</feature>
<gene>
    <name evidence="1" type="primary">thiG</name>
    <name type="ordered locus">BT_0763</name>
</gene>
<organism>
    <name type="scientific">Bartonella tribocorum (strain CIP 105476 / IBS 506)</name>
    <dbReference type="NCBI Taxonomy" id="382640"/>
    <lineage>
        <taxon>Bacteria</taxon>
        <taxon>Pseudomonadati</taxon>
        <taxon>Pseudomonadota</taxon>
        <taxon>Alphaproteobacteria</taxon>
        <taxon>Hyphomicrobiales</taxon>
        <taxon>Bartonellaceae</taxon>
        <taxon>Bartonella</taxon>
    </lineage>
</organism>
<reference key="1">
    <citation type="journal article" date="2007" name="Nat. Genet.">
        <title>Genomic analysis of Bartonella identifies type IV secretion systems as host adaptability factors.</title>
        <authorList>
            <person name="Saenz H.L."/>
            <person name="Engel P."/>
            <person name="Stoeckli M.C."/>
            <person name="Lanz C."/>
            <person name="Raddatz G."/>
            <person name="Vayssier-Taussat M."/>
            <person name="Birtles R."/>
            <person name="Schuster S.C."/>
            <person name="Dehio C."/>
        </authorList>
    </citation>
    <scope>NUCLEOTIDE SEQUENCE [LARGE SCALE GENOMIC DNA]</scope>
    <source>
        <strain>CIP 105476 / IBS 506</strain>
    </source>
</reference>
<sequence length="256" mass="27555">MLNLYGREFSSRLMLGTAQYPSPAILRDAICKSGTEIITVSLRRESAGGKQGGQFWQFLQELDITILPNTAGCYTVKEAVTTAYLARDLFKTSWIKLEIIGNADTLQPNVFSLIEAAKILNSEGFHIFAYTTDDLIVAEKLLDVGCRVIMPWCAPIGSAKGPHHIDGLRSIRAYLPDVTLIVDAGIGRPSHAAVAMELGYDAVLLNTAVAKAGDPILMAEAFSKAIQAGRMGYKAGILEARNVAVPSTPVIGKAVF</sequence>
<proteinExistence type="inferred from homology"/>
<evidence type="ECO:0000255" key="1">
    <source>
        <dbReference type="HAMAP-Rule" id="MF_00443"/>
    </source>
</evidence>
<comment type="function">
    <text evidence="1">Catalyzes the rearrangement of 1-deoxy-D-xylulose 5-phosphate (DXP) to produce the thiazole phosphate moiety of thiamine. Sulfur is provided by the thiocarboxylate moiety of the carrier protein ThiS. In vitro, sulfur can be provided by H(2)S.</text>
</comment>
<comment type="catalytic activity">
    <reaction evidence="1">
        <text>[ThiS sulfur-carrier protein]-C-terminal-Gly-aminoethanethioate + 2-iminoacetate + 1-deoxy-D-xylulose 5-phosphate = [ThiS sulfur-carrier protein]-C-terminal Gly-Gly + 2-[(2R,5Z)-2-carboxy-4-methylthiazol-5(2H)-ylidene]ethyl phosphate + 2 H2O + H(+)</text>
        <dbReference type="Rhea" id="RHEA:26297"/>
        <dbReference type="Rhea" id="RHEA-COMP:12909"/>
        <dbReference type="Rhea" id="RHEA-COMP:19908"/>
        <dbReference type="ChEBI" id="CHEBI:15377"/>
        <dbReference type="ChEBI" id="CHEBI:15378"/>
        <dbReference type="ChEBI" id="CHEBI:57792"/>
        <dbReference type="ChEBI" id="CHEBI:62899"/>
        <dbReference type="ChEBI" id="CHEBI:77846"/>
        <dbReference type="ChEBI" id="CHEBI:90778"/>
        <dbReference type="ChEBI" id="CHEBI:232372"/>
        <dbReference type="EC" id="2.8.1.10"/>
    </reaction>
</comment>
<comment type="pathway">
    <text evidence="1">Cofactor biosynthesis; thiamine diphosphate biosynthesis.</text>
</comment>
<comment type="subunit">
    <text evidence="1">Homotetramer. Forms heterodimers with either ThiH or ThiS.</text>
</comment>
<comment type="subcellular location">
    <subcellularLocation>
        <location evidence="1">Cytoplasm</location>
    </subcellularLocation>
</comment>
<comment type="similarity">
    <text evidence="1">Belongs to the ThiG family.</text>
</comment>
<keyword id="KW-0963">Cytoplasm</keyword>
<keyword id="KW-0704">Schiff base</keyword>
<keyword id="KW-0784">Thiamine biosynthesis</keyword>
<keyword id="KW-0808">Transferase</keyword>
<dbReference type="EC" id="2.8.1.10" evidence="1"/>
<dbReference type="EMBL" id="AM260525">
    <property type="protein sequence ID" value="CAK01180.1"/>
    <property type="molecule type" value="Genomic_DNA"/>
</dbReference>
<dbReference type="RefSeq" id="WP_012231291.1">
    <property type="nucleotide sequence ID" value="NC_010161.1"/>
</dbReference>
<dbReference type="SMR" id="A9IRH0"/>
<dbReference type="KEGG" id="btr:BT_0763"/>
<dbReference type="eggNOG" id="COG2022">
    <property type="taxonomic scope" value="Bacteria"/>
</dbReference>
<dbReference type="HOGENOM" id="CLU_062233_1_0_5"/>
<dbReference type="UniPathway" id="UPA00060"/>
<dbReference type="Proteomes" id="UP000001592">
    <property type="component" value="Chromosome"/>
</dbReference>
<dbReference type="GO" id="GO:0005737">
    <property type="term" value="C:cytoplasm"/>
    <property type="evidence" value="ECO:0007669"/>
    <property type="project" value="UniProtKB-SubCell"/>
</dbReference>
<dbReference type="GO" id="GO:1990107">
    <property type="term" value="F:thiazole synthase activity"/>
    <property type="evidence" value="ECO:0007669"/>
    <property type="project" value="UniProtKB-EC"/>
</dbReference>
<dbReference type="GO" id="GO:0009229">
    <property type="term" value="P:thiamine diphosphate biosynthetic process"/>
    <property type="evidence" value="ECO:0007669"/>
    <property type="project" value="UniProtKB-UniRule"/>
</dbReference>
<dbReference type="CDD" id="cd04728">
    <property type="entry name" value="ThiG"/>
    <property type="match status" value="1"/>
</dbReference>
<dbReference type="Gene3D" id="3.20.20.70">
    <property type="entry name" value="Aldolase class I"/>
    <property type="match status" value="1"/>
</dbReference>
<dbReference type="HAMAP" id="MF_00443">
    <property type="entry name" value="ThiG"/>
    <property type="match status" value="1"/>
</dbReference>
<dbReference type="InterPro" id="IPR013785">
    <property type="entry name" value="Aldolase_TIM"/>
</dbReference>
<dbReference type="InterPro" id="IPR033983">
    <property type="entry name" value="Thiazole_synthase_ThiG"/>
</dbReference>
<dbReference type="InterPro" id="IPR008867">
    <property type="entry name" value="ThiG"/>
</dbReference>
<dbReference type="PANTHER" id="PTHR34266">
    <property type="entry name" value="THIAZOLE SYNTHASE"/>
    <property type="match status" value="1"/>
</dbReference>
<dbReference type="PANTHER" id="PTHR34266:SF2">
    <property type="entry name" value="THIAZOLE SYNTHASE"/>
    <property type="match status" value="1"/>
</dbReference>
<dbReference type="Pfam" id="PF05690">
    <property type="entry name" value="ThiG"/>
    <property type="match status" value="1"/>
</dbReference>
<dbReference type="SUPFAM" id="SSF110399">
    <property type="entry name" value="ThiG-like"/>
    <property type="match status" value="1"/>
</dbReference>